<organism>
    <name type="scientific">Staphylococcus aureus (strain NCTC 8325 / PS 47)</name>
    <dbReference type="NCBI Taxonomy" id="93061"/>
    <lineage>
        <taxon>Bacteria</taxon>
        <taxon>Bacillati</taxon>
        <taxon>Bacillota</taxon>
        <taxon>Bacilli</taxon>
        <taxon>Bacillales</taxon>
        <taxon>Staphylococcaceae</taxon>
        <taxon>Staphylococcus</taxon>
    </lineage>
</organism>
<proteinExistence type="inferred from homology"/>
<dbReference type="EMBL" id="AF230358">
    <property type="protein sequence ID" value="AAF43204.1"/>
    <property type="status" value="ALT_INIT"/>
    <property type="molecule type" value="Genomic_DNA"/>
</dbReference>
<dbReference type="EMBL" id="CP000253">
    <property type="protein sequence ID" value="ABD31299.1"/>
    <property type="status" value="ALT_INIT"/>
    <property type="molecule type" value="Genomic_DNA"/>
</dbReference>
<dbReference type="PIR" id="A01767">
    <property type="entry name" value="LESAD"/>
</dbReference>
<dbReference type="RefSeq" id="YP_500742.1">
    <property type="nucleotide sequence ID" value="NC_007795.1"/>
</dbReference>
<dbReference type="BMRB" id="Q2FWM8"/>
<dbReference type="SMR" id="Q2FWM8"/>
<dbReference type="STRING" id="93061.SAOUHSC_02260"/>
<dbReference type="PaxDb" id="1280-SAXN108_2128"/>
<dbReference type="GeneID" id="3919680"/>
<dbReference type="KEGG" id="sao:SAOUHSC_02260"/>
<dbReference type="PATRIC" id="fig|93061.5.peg.2053"/>
<dbReference type="HOGENOM" id="CLU_3222291_0_0_9"/>
<dbReference type="OrthoDB" id="2404330at2"/>
<dbReference type="Proteomes" id="UP000008816">
    <property type="component" value="Chromosome"/>
</dbReference>
<dbReference type="GO" id="GO:0005576">
    <property type="term" value="C:extracellular region"/>
    <property type="evidence" value="ECO:0007669"/>
    <property type="project" value="UniProtKB-SubCell"/>
</dbReference>
<dbReference type="GO" id="GO:0020002">
    <property type="term" value="C:host cell plasma membrane"/>
    <property type="evidence" value="ECO:0007669"/>
    <property type="project" value="UniProtKB-SubCell"/>
</dbReference>
<dbReference type="GO" id="GO:0016020">
    <property type="term" value="C:membrane"/>
    <property type="evidence" value="ECO:0007669"/>
    <property type="project" value="UniProtKB-KW"/>
</dbReference>
<dbReference type="GO" id="GO:0090729">
    <property type="term" value="F:toxin activity"/>
    <property type="evidence" value="ECO:0007669"/>
    <property type="project" value="UniProtKB-KW"/>
</dbReference>
<dbReference type="GO" id="GO:0019836">
    <property type="term" value="P:symbiont-mediated hemolysis of host erythrocyte"/>
    <property type="evidence" value="ECO:0007669"/>
    <property type="project" value="InterPro"/>
</dbReference>
<dbReference type="InterPro" id="IPR008034">
    <property type="entry name" value="Delta_lysin"/>
</dbReference>
<dbReference type="NCBIfam" id="NF011336">
    <property type="entry name" value="PRK14752.1-1"/>
    <property type="match status" value="1"/>
</dbReference>
<dbReference type="NCBIfam" id="NF011338">
    <property type="entry name" value="PRK14752.1-4"/>
    <property type="match status" value="1"/>
</dbReference>
<dbReference type="Pfam" id="PF05372">
    <property type="entry name" value="Delta_lysin"/>
    <property type="match status" value="1"/>
</dbReference>
<protein>
    <recommendedName>
        <fullName>Delta-hemolysin</fullName>
        <shortName>Delta-lysin</shortName>
    </recommendedName>
    <alternativeName>
        <fullName>Delta-toxin</fullName>
    </alternativeName>
</protein>
<accession>Q2FWM8</accession>
<accession>P01506</accession>
<accession>P0A0M3</accession>
<evidence type="ECO:0000250" key="1"/>
<evidence type="ECO:0000305" key="2"/>
<name>HLD_STAA8</name>
<keyword id="KW-0204">Cytolysis</keyword>
<keyword id="KW-0291">Formylation</keyword>
<keyword id="KW-0354">Hemolysis</keyword>
<keyword id="KW-1032">Host cell membrane</keyword>
<keyword id="KW-1043">Host membrane</keyword>
<keyword id="KW-0472">Membrane</keyword>
<keyword id="KW-1185">Reference proteome</keyword>
<keyword id="KW-0964">Secreted</keyword>
<keyword id="KW-0800">Toxin</keyword>
<keyword id="KW-0812">Transmembrane</keyword>
<keyword id="KW-0843">Virulence</keyword>
<sequence length="26" mass="2979">MAQDIISTIGDLVKWIIDTVNKFTKK</sequence>
<reference key="1">
    <citation type="journal article" date="1989" name="Mol. Gen. Genet.">
        <title>Identification and nucleotide sequence of the delta-lysin gene, hld, adjacent to the accessory gene regulator (agr) of Staphylococcus aureus.</title>
        <authorList>
            <person name="Janzon L."/>
            <person name="Loefdahl S."/>
            <person name="Arvidson S."/>
        </authorList>
    </citation>
    <scope>NUCLEOTIDE SEQUENCE [GENOMIC DNA]</scope>
</reference>
<reference key="2">
    <citation type="submission" date="2000-02" db="EMBL/GenBank/DDBJ databases">
        <title>DNA for hld, agrB, and agrD genes of Staphylococcus aureus strain RN4220.</title>
        <authorList>
            <person name="Bischoff M."/>
        </authorList>
    </citation>
    <scope>NUCLEOTIDE SEQUENCE [GENOMIC DNA]</scope>
</reference>
<reference key="3">
    <citation type="book" date="2006" name="Gram positive pathogens, 2nd edition">
        <title>The Staphylococcus aureus NCTC 8325 genome.</title>
        <editorList>
            <person name="Fischetti V."/>
            <person name="Novick R."/>
            <person name="Ferretti J."/>
            <person name="Portnoy D."/>
            <person name="Rood J."/>
        </editorList>
        <authorList>
            <person name="Gillaspy A.F."/>
            <person name="Worrell V."/>
            <person name="Orvis J."/>
            <person name="Roe B.A."/>
            <person name="Dyer D.W."/>
            <person name="Iandolo J.J."/>
        </authorList>
    </citation>
    <scope>NUCLEOTIDE SEQUENCE [LARGE SCALE GENOMIC DNA]</scope>
    <source>
        <strain>NCTC 8325 / PS 47</strain>
    </source>
</reference>
<gene>
    <name type="primary">hld</name>
    <name type="ordered locus">SAOUHSC_02260</name>
</gene>
<comment type="function">
    <text evidence="1">Lyses erythrocytes and many other mammalian cells.</text>
</comment>
<comment type="subcellular location">
    <subcellularLocation>
        <location evidence="1">Secreted</location>
    </subcellularLocation>
    <subcellularLocation>
        <location evidence="1">Host cell membrane</location>
    </subcellularLocation>
    <text evidence="1">In infected cells, it is found in the membrane.</text>
</comment>
<comment type="similarity">
    <text evidence="2">Belongs to the delta-lysin family.</text>
</comment>
<comment type="sequence caution" evidence="2">
    <conflict type="erroneous initiation">
        <sequence resource="EMBL-CDS" id="AAF43204"/>
    </conflict>
</comment>
<comment type="sequence caution" evidence="2">
    <conflict type="erroneous initiation">
        <sequence resource="EMBL-CDS" id="ABD31299"/>
    </conflict>
</comment>
<feature type="peptide" id="PRO_0000249337" description="Delta-hemolysin">
    <location>
        <begin position="1"/>
        <end position="26"/>
    </location>
</feature>
<feature type="modified residue" description="N-formylmethionine" evidence="1">
    <location>
        <position position="1"/>
    </location>
</feature>